<name>RLME_PARL1</name>
<feature type="chain" id="PRO_1000087697" description="Ribosomal RNA large subunit methyltransferase E">
    <location>
        <begin position="1"/>
        <end position="254"/>
    </location>
</feature>
<feature type="region of interest" description="Disordered" evidence="2">
    <location>
        <begin position="1"/>
        <end position="26"/>
    </location>
</feature>
<feature type="compositionally biased region" description="Gly residues" evidence="2">
    <location>
        <begin position="1"/>
        <end position="18"/>
    </location>
</feature>
<feature type="active site" description="Proton acceptor" evidence="1">
    <location>
        <position position="199"/>
    </location>
</feature>
<feature type="binding site" evidence="1">
    <location>
        <position position="89"/>
    </location>
    <ligand>
        <name>S-adenosyl-L-methionine</name>
        <dbReference type="ChEBI" id="CHEBI:59789"/>
    </ligand>
</feature>
<feature type="binding site" evidence="1">
    <location>
        <position position="91"/>
    </location>
    <ligand>
        <name>S-adenosyl-L-methionine</name>
        <dbReference type="ChEBI" id="CHEBI:59789"/>
    </ligand>
</feature>
<feature type="binding site" evidence="1">
    <location>
        <position position="119"/>
    </location>
    <ligand>
        <name>S-adenosyl-L-methionine</name>
        <dbReference type="ChEBI" id="CHEBI:59789"/>
    </ligand>
</feature>
<feature type="binding site" evidence="1">
    <location>
        <position position="135"/>
    </location>
    <ligand>
        <name>S-adenosyl-L-methionine</name>
        <dbReference type="ChEBI" id="CHEBI:59789"/>
    </ligand>
</feature>
<feature type="binding site" evidence="1">
    <location>
        <position position="159"/>
    </location>
    <ligand>
        <name>S-adenosyl-L-methionine</name>
        <dbReference type="ChEBI" id="CHEBI:59789"/>
    </ligand>
</feature>
<comment type="function">
    <text evidence="1">Specifically methylates the uridine in position 2552 of 23S rRNA at the 2'-O position of the ribose in the fully assembled 50S ribosomal subunit.</text>
</comment>
<comment type="catalytic activity">
    <reaction evidence="1">
        <text>uridine(2552) in 23S rRNA + S-adenosyl-L-methionine = 2'-O-methyluridine(2552) in 23S rRNA + S-adenosyl-L-homocysteine + H(+)</text>
        <dbReference type="Rhea" id="RHEA:42720"/>
        <dbReference type="Rhea" id="RHEA-COMP:10202"/>
        <dbReference type="Rhea" id="RHEA-COMP:10203"/>
        <dbReference type="ChEBI" id="CHEBI:15378"/>
        <dbReference type="ChEBI" id="CHEBI:57856"/>
        <dbReference type="ChEBI" id="CHEBI:59789"/>
        <dbReference type="ChEBI" id="CHEBI:65315"/>
        <dbReference type="ChEBI" id="CHEBI:74478"/>
        <dbReference type="EC" id="2.1.1.166"/>
    </reaction>
</comment>
<comment type="subcellular location">
    <subcellularLocation>
        <location evidence="1">Cytoplasm</location>
    </subcellularLocation>
</comment>
<comment type="similarity">
    <text evidence="1">Belongs to the class I-like SAM-binding methyltransferase superfamily. RNA methyltransferase RlmE family.</text>
</comment>
<keyword id="KW-0963">Cytoplasm</keyword>
<keyword id="KW-0489">Methyltransferase</keyword>
<keyword id="KW-1185">Reference proteome</keyword>
<keyword id="KW-0698">rRNA processing</keyword>
<keyword id="KW-0949">S-adenosyl-L-methionine</keyword>
<keyword id="KW-0808">Transferase</keyword>
<organism>
    <name type="scientific">Parvibaculum lavamentivorans (strain DS-1 / DSM 13023 / NCIMB 13966)</name>
    <dbReference type="NCBI Taxonomy" id="402881"/>
    <lineage>
        <taxon>Bacteria</taxon>
        <taxon>Pseudomonadati</taxon>
        <taxon>Pseudomonadota</taxon>
        <taxon>Alphaproteobacteria</taxon>
        <taxon>Hyphomicrobiales</taxon>
        <taxon>Parvibaculaceae</taxon>
        <taxon>Parvibaculum</taxon>
    </lineage>
</organism>
<dbReference type="EC" id="2.1.1.166" evidence="1"/>
<dbReference type="EMBL" id="CP000774">
    <property type="protein sequence ID" value="ABS62788.1"/>
    <property type="molecule type" value="Genomic_DNA"/>
</dbReference>
<dbReference type="RefSeq" id="WP_012110053.1">
    <property type="nucleotide sequence ID" value="NC_009719.1"/>
</dbReference>
<dbReference type="SMR" id="A7HSA5"/>
<dbReference type="STRING" id="402881.Plav_1167"/>
<dbReference type="KEGG" id="pla:Plav_1167"/>
<dbReference type="eggNOG" id="COG0293">
    <property type="taxonomic scope" value="Bacteria"/>
</dbReference>
<dbReference type="HOGENOM" id="CLU_009422_4_0_5"/>
<dbReference type="OrthoDB" id="9790080at2"/>
<dbReference type="Proteomes" id="UP000006377">
    <property type="component" value="Chromosome"/>
</dbReference>
<dbReference type="GO" id="GO:0005737">
    <property type="term" value="C:cytoplasm"/>
    <property type="evidence" value="ECO:0007669"/>
    <property type="project" value="UniProtKB-SubCell"/>
</dbReference>
<dbReference type="GO" id="GO:0008650">
    <property type="term" value="F:rRNA (uridine-2'-O-)-methyltransferase activity"/>
    <property type="evidence" value="ECO:0007669"/>
    <property type="project" value="UniProtKB-UniRule"/>
</dbReference>
<dbReference type="Gene3D" id="3.40.50.150">
    <property type="entry name" value="Vaccinia Virus protein VP39"/>
    <property type="match status" value="1"/>
</dbReference>
<dbReference type="HAMAP" id="MF_01547">
    <property type="entry name" value="RNA_methyltr_E"/>
    <property type="match status" value="1"/>
</dbReference>
<dbReference type="InterPro" id="IPR050082">
    <property type="entry name" value="RNA_methyltr_RlmE"/>
</dbReference>
<dbReference type="InterPro" id="IPR002877">
    <property type="entry name" value="RNA_MeTrfase_FtsJ_dom"/>
</dbReference>
<dbReference type="InterPro" id="IPR015507">
    <property type="entry name" value="rRNA-MeTfrase_E"/>
</dbReference>
<dbReference type="InterPro" id="IPR029063">
    <property type="entry name" value="SAM-dependent_MTases_sf"/>
</dbReference>
<dbReference type="PANTHER" id="PTHR10920">
    <property type="entry name" value="RIBOSOMAL RNA METHYLTRANSFERASE"/>
    <property type="match status" value="1"/>
</dbReference>
<dbReference type="PANTHER" id="PTHR10920:SF18">
    <property type="entry name" value="RRNA METHYLTRANSFERASE 2, MITOCHONDRIAL"/>
    <property type="match status" value="1"/>
</dbReference>
<dbReference type="Pfam" id="PF01728">
    <property type="entry name" value="FtsJ"/>
    <property type="match status" value="1"/>
</dbReference>
<dbReference type="PIRSF" id="PIRSF005461">
    <property type="entry name" value="23S_rRNA_mtase"/>
    <property type="match status" value="1"/>
</dbReference>
<dbReference type="SUPFAM" id="SSF53335">
    <property type="entry name" value="S-adenosyl-L-methionine-dependent methyltransferases"/>
    <property type="match status" value="1"/>
</dbReference>
<proteinExistence type="inferred from homology"/>
<evidence type="ECO:0000255" key="1">
    <source>
        <dbReference type="HAMAP-Rule" id="MF_01547"/>
    </source>
</evidence>
<evidence type="ECO:0000256" key="2">
    <source>
        <dbReference type="SAM" id="MobiDB-lite"/>
    </source>
</evidence>
<gene>
    <name evidence="1" type="primary">rlmE</name>
    <name evidence="1" type="synonym">ftsJ</name>
    <name evidence="1" type="synonym">rrmJ</name>
    <name type="ordered locus">Plav_1167</name>
</gene>
<protein>
    <recommendedName>
        <fullName evidence="1">Ribosomal RNA large subunit methyltransferase E</fullName>
        <ecNumber evidence="1">2.1.1.166</ecNumber>
    </recommendedName>
    <alternativeName>
        <fullName evidence="1">23S rRNA Um2552 methyltransferase</fullName>
    </alternativeName>
    <alternativeName>
        <fullName evidence="1">rRNA (uridine-2'-O-)-methyltransferase</fullName>
    </alternativeName>
</protein>
<sequence>MTNSGKTGGKSGKGGTGGARALKVRVKTARKRSNSSTRWLQRQLNDPYVHAAKREGYRSRAAFKLAEIDDKYRFLKPGGRVVDLGCAPGGWCQVAVARVKAEGGDAGAEGRHGRVIGLDYLEMDPVPGATILQLDFLSEGADDQVKELLAGEADVVLSDMAAPTTGHKQTDHMRIMSLCEIAAHFATEVLAPGGTFLAKVLRGGTENELLVLLKQHFKTVRHVKPKASRADSAEMYVLAQGFKGRSESPLDDAE</sequence>
<reference key="1">
    <citation type="journal article" date="2011" name="Stand. Genomic Sci.">
        <title>Complete genome sequence of Parvibaculum lavamentivorans type strain (DS-1(T)).</title>
        <authorList>
            <person name="Schleheck D."/>
            <person name="Weiss M."/>
            <person name="Pitluck S."/>
            <person name="Bruce D."/>
            <person name="Land M.L."/>
            <person name="Han S."/>
            <person name="Saunders E."/>
            <person name="Tapia R."/>
            <person name="Detter C."/>
            <person name="Brettin T."/>
            <person name="Han J."/>
            <person name="Woyke T."/>
            <person name="Goodwin L."/>
            <person name="Pennacchio L."/>
            <person name="Nolan M."/>
            <person name="Cook A.M."/>
            <person name="Kjelleberg S."/>
            <person name="Thomas T."/>
        </authorList>
    </citation>
    <scope>NUCLEOTIDE SEQUENCE [LARGE SCALE GENOMIC DNA]</scope>
    <source>
        <strain>DS-1 / DSM 13023 / NCIMB 13966</strain>
    </source>
</reference>
<accession>A7HSA5</accession>